<gene>
    <name evidence="1" type="primary">ccsA</name>
</gene>
<evidence type="ECO:0000255" key="1">
    <source>
        <dbReference type="HAMAP-Rule" id="MF_01391"/>
    </source>
</evidence>
<reference key="1">
    <citation type="submission" date="2006-01" db="EMBL/GenBank/DDBJ databases">
        <title>A comparison of the first two published chloroplast genomes in Asteraceae: Lactuca and Helianthus.</title>
        <authorList>
            <person name="Timme R.E."/>
            <person name="Kuehl J.V."/>
            <person name="Boore J.L."/>
            <person name="Jansen R.K."/>
        </authorList>
    </citation>
    <scope>NUCLEOTIDE SEQUENCE [LARGE SCALE GENOMIC DNA]</scope>
    <source>
        <strain>cv. HA383</strain>
    </source>
</reference>
<dbReference type="EMBL" id="DQ383815">
    <property type="protein sequence ID" value="ABD47202.1"/>
    <property type="molecule type" value="Genomic_DNA"/>
</dbReference>
<dbReference type="RefSeq" id="YP_588174.1">
    <property type="nucleotide sequence ID" value="NC_007977.1"/>
</dbReference>
<dbReference type="SMR" id="Q1KXQ2"/>
<dbReference type="EnsemblPlants" id="mRNA:HanXRQr2_Chr06g0273441">
    <property type="protein sequence ID" value="CDS:HanXRQr2_Chr06g0273441.1"/>
    <property type="gene ID" value="HanXRQr2_Chr06g0273441"/>
</dbReference>
<dbReference type="GeneID" id="4055628"/>
<dbReference type="Gramene" id="mRNA:HanXRQr2_Chr06g0273441">
    <property type="protein sequence ID" value="CDS:HanXRQr2_Chr06g0273441.1"/>
    <property type="gene ID" value="HanXRQr2_Chr06g0273441"/>
</dbReference>
<dbReference type="KEGG" id="han:4055628"/>
<dbReference type="OrthoDB" id="1640at2759"/>
<dbReference type="PhylomeDB" id="Q1KXQ2"/>
<dbReference type="GO" id="GO:0009535">
    <property type="term" value="C:chloroplast thylakoid membrane"/>
    <property type="evidence" value="ECO:0007669"/>
    <property type="project" value="UniProtKB-SubCell"/>
</dbReference>
<dbReference type="GO" id="GO:0020037">
    <property type="term" value="F:heme binding"/>
    <property type="evidence" value="ECO:0007669"/>
    <property type="project" value="InterPro"/>
</dbReference>
<dbReference type="GO" id="GO:0017004">
    <property type="term" value="P:cytochrome complex assembly"/>
    <property type="evidence" value="ECO:0007669"/>
    <property type="project" value="UniProtKB-UniRule"/>
</dbReference>
<dbReference type="HAMAP" id="MF_01391">
    <property type="entry name" value="CytC_CcsA"/>
    <property type="match status" value="1"/>
</dbReference>
<dbReference type="InterPro" id="IPR002541">
    <property type="entry name" value="Cyt_c_assembly"/>
</dbReference>
<dbReference type="InterPro" id="IPR017562">
    <property type="entry name" value="Cyt_c_biogenesis_CcsA"/>
</dbReference>
<dbReference type="InterPro" id="IPR045062">
    <property type="entry name" value="Cyt_c_biogenesis_CcsA/CcmC"/>
</dbReference>
<dbReference type="NCBIfam" id="TIGR03144">
    <property type="entry name" value="cytochr_II_ccsB"/>
    <property type="match status" value="1"/>
</dbReference>
<dbReference type="PANTHER" id="PTHR30071:SF1">
    <property type="entry name" value="CYTOCHROME B_B6 PROTEIN-RELATED"/>
    <property type="match status" value="1"/>
</dbReference>
<dbReference type="PANTHER" id="PTHR30071">
    <property type="entry name" value="HEME EXPORTER PROTEIN C"/>
    <property type="match status" value="1"/>
</dbReference>
<dbReference type="Pfam" id="PF01578">
    <property type="entry name" value="Cytochrom_C_asm"/>
    <property type="match status" value="1"/>
</dbReference>
<organism>
    <name type="scientific">Helianthus annuus</name>
    <name type="common">Common sunflower</name>
    <dbReference type="NCBI Taxonomy" id="4232"/>
    <lineage>
        <taxon>Eukaryota</taxon>
        <taxon>Viridiplantae</taxon>
        <taxon>Streptophyta</taxon>
        <taxon>Embryophyta</taxon>
        <taxon>Tracheophyta</taxon>
        <taxon>Spermatophyta</taxon>
        <taxon>Magnoliopsida</taxon>
        <taxon>eudicotyledons</taxon>
        <taxon>Gunneridae</taxon>
        <taxon>Pentapetalae</taxon>
        <taxon>asterids</taxon>
        <taxon>campanulids</taxon>
        <taxon>Asterales</taxon>
        <taxon>Asteraceae</taxon>
        <taxon>Asteroideae</taxon>
        <taxon>Heliantheae alliance</taxon>
        <taxon>Heliantheae</taxon>
        <taxon>Helianthus</taxon>
    </lineage>
</organism>
<geneLocation type="chloroplast"/>
<protein>
    <recommendedName>
        <fullName evidence="1">Cytochrome c biogenesis protein CcsA</fullName>
    </recommendedName>
</protein>
<sequence length="322" mass="36765">MIFSTLEHILTHISFSIVSIVITLHLITLLGNEIIKPYDSSEKGMIATFLCLTGLLTTRWIYSGHFPLSDLYESLIFLSWSFSLIHIVPYFKIRKNDLTTITASITIFTQGFATSGLLNEIHKPTILVPALQSEWLIMHVSMMILSYAALLCGSLLSVALLVITFRNIFYSSKSNNLLKLNESFSFGEIQYKNERNNIFQKTSFFSDKNYYKAQFIQQLDYWSYRVISLGFIFLTIGILSGAVWANEAWGSYWSWDPKETWAFITWIVFAIYLHTRTNKNLQGANSAIVATLGFLIIWICYFGVNLLGIGLHSYGSFTLTYS</sequence>
<keyword id="KW-0150">Chloroplast</keyword>
<keyword id="KW-0201">Cytochrome c-type biogenesis</keyword>
<keyword id="KW-0472">Membrane</keyword>
<keyword id="KW-0934">Plastid</keyword>
<keyword id="KW-0793">Thylakoid</keyword>
<keyword id="KW-0812">Transmembrane</keyword>
<keyword id="KW-1133">Transmembrane helix</keyword>
<comment type="function">
    <text evidence="1">Required during biogenesis of c-type cytochromes (cytochrome c6 and cytochrome f) at the step of heme attachment.</text>
</comment>
<comment type="subunit">
    <text evidence="1">May interact with Ccs1.</text>
</comment>
<comment type="subcellular location">
    <subcellularLocation>
        <location evidence="1">Plastid</location>
        <location evidence="1">Chloroplast thylakoid membrane</location>
        <topology evidence="1">Multi-pass membrane protein</topology>
    </subcellularLocation>
</comment>
<comment type="similarity">
    <text evidence="1">Belongs to the CcmF/CycK/Ccl1/NrfE/CcsA family.</text>
</comment>
<feature type="chain" id="PRO_0000353757" description="Cytochrome c biogenesis protein CcsA">
    <location>
        <begin position="1"/>
        <end position="322"/>
    </location>
</feature>
<feature type="transmembrane region" description="Helical" evidence="1">
    <location>
        <begin position="9"/>
        <end position="29"/>
    </location>
</feature>
<feature type="transmembrane region" description="Helical" evidence="1">
    <location>
        <begin position="44"/>
        <end position="64"/>
    </location>
</feature>
<feature type="transmembrane region" description="Helical" evidence="1">
    <location>
        <begin position="71"/>
        <end position="91"/>
    </location>
</feature>
<feature type="transmembrane region" description="Helical" evidence="1">
    <location>
        <begin position="98"/>
        <end position="118"/>
    </location>
</feature>
<feature type="transmembrane region" description="Helical" evidence="1">
    <location>
        <begin position="143"/>
        <end position="163"/>
    </location>
</feature>
<feature type="transmembrane region" description="Helical" evidence="1">
    <location>
        <begin position="226"/>
        <end position="246"/>
    </location>
</feature>
<feature type="transmembrane region" description="Helical" evidence="1">
    <location>
        <begin position="253"/>
        <end position="273"/>
    </location>
</feature>
<feature type="transmembrane region" description="Helical" evidence="1">
    <location>
        <begin position="287"/>
        <end position="307"/>
    </location>
</feature>
<accession>Q1KXQ2</accession>
<proteinExistence type="inferred from homology"/>
<name>CCSA_HELAN</name>